<proteinExistence type="inferred from homology"/>
<organism>
    <name type="scientific">Xenopus tropicalis</name>
    <name type="common">Western clawed frog</name>
    <name type="synonym">Silurana tropicalis</name>
    <dbReference type="NCBI Taxonomy" id="8364"/>
    <lineage>
        <taxon>Eukaryota</taxon>
        <taxon>Metazoa</taxon>
        <taxon>Chordata</taxon>
        <taxon>Craniata</taxon>
        <taxon>Vertebrata</taxon>
        <taxon>Euteleostomi</taxon>
        <taxon>Amphibia</taxon>
        <taxon>Batrachia</taxon>
        <taxon>Anura</taxon>
        <taxon>Pipoidea</taxon>
        <taxon>Pipidae</taxon>
        <taxon>Xenopodinae</taxon>
        <taxon>Xenopus</taxon>
        <taxon>Silurana</taxon>
    </lineage>
</organism>
<sequence>MNISASTCGSPSSSESLPAGDLFKELWSKLKECHDKELQELLLKINKLKKQRCLDAQRLEEFYTKNQHLREQQKTLHDTIKVLEDRLRAGLCDRCTVTEEHMRKKQQEFENIRQQNLKLITELMNDKNALQDENKRLSEQLHNMQKSRWKSDEENPADTGEGEDGVIPDSPLSTFSLSMVSRMRRKKDNKHIRYSEKAPEDTLTLERKITCIPSQGSAEKNASHSSHRRKGEDILVAETLELSPLPNGKSKRKKVYLCSKTSIAFASILLVLLHLFAEQLHSWMNNLSQVSKSLRWCLPLKGNNKQGYIEYLFRFTEGSMEESQGNDDDGWNTKEASPVFGGPARNIRRSAEMDCISPPLPVGLNSKLISKCSRNPSDFLFNSVQAKAEDGAQATRLCLGKETDSVISQCSSNGQGVLRCSPNKSVPGGAQMGKDILDSEHHKQMANRYGKRKNAEAEQEESCESSFDKENNIPIKDIGSERHSMLDKPLDLSDRFSVLRPQDRSHGSSRGRTKQTFALVPEKPDPKKPLHIDLREDLYHQTKQKKVFVSGLVERSAFNLHEDKEVTEEGNQLFDDLEIETVHEPKRNARSVHRGVQPTSVLQPNLHMVQACPESQQGKPPIDNMQWSIDPGADLSQYEMDMTMEDSKGGSPAKPELEDMDYTYVSESFLLKMKKGDPGDSEDESKGQDSFEKMFDKSEYGEYVLCIKDRSPSQSCKERNDLSSMVCKNIYTHSVRFDRVKKQKAFVEPYFQRPEQKKPAMDFPHIEVVRKKDERRKMLGHTCKECELYYADLPEEERAKKLASCSRHRFRYIPPSTPENFWEVGFPSTQTCQDRGYIKEELSPCQRPRRRQPYNAKFSSKIKEQKT</sequence>
<comment type="function">
    <text evidence="3">Endonuclease that cooperates with the MRE11-RAD50-NBN (MRN) complex in DNA-end resection, the first step of double-strand break (DSB) repair through the homologous recombination (HR) pathway. Functions downstream of the MRN complex and ATM, promotes ATR activation and its recruitment to DSBs in the S/G2 phase facilitating the generation of ssDNA. Specifically promotes the endonuclease activity of the MRN complex to clear DNA ends containing protein adducts: recruited to DSBs by nbn following phosphorylation, and promotes the endonuclease of mre11 to clear protein-DNA adducts and generate clean double-strand break ends.</text>
</comment>
<comment type="subunit">
    <text evidence="2 3">Homotetramer; formed by antiparallel association of helical extensions protruding from the N-termini of two parallel coiled-coil dimers (By similarity). Interacts with the MRN complex; the interaction links DNA sensing to resection (By similarity). Interacts with samhd1 (By similarity).</text>
</comment>
<comment type="subcellular location">
    <subcellularLocation>
        <location evidence="3">Nucleus</location>
    </subcellularLocation>
    <subcellularLocation>
        <location evidence="3">Chromosome</location>
    </subcellularLocation>
    <text evidence="3">Associates with sites of DNA damage in S/G2 phase. Recruited to DSBs by the MRE11-RAD50-NBN (MRN) complex following phosphorylation.</text>
</comment>
<comment type="domain">
    <text evidence="2">The damage-recruitment motif is required for DNA binding and translocation to sites of DNA damage.</text>
</comment>
<comment type="PTM">
    <text evidence="3">Phosphorylation at Thr-817 and Thr-829 promote interaction with nbn and recruitment to double-strand breaks (DSBs).</text>
</comment>
<comment type="miscellaneous">
    <text evidence="3">Binds one Zn(2+) atom per dimer. Zn(2+)-binding is not required for homotetramerization.</text>
</comment>
<comment type="similarity">
    <text evidence="5">Belongs to the COM1/SAE2/CtIP family.</text>
</comment>
<accession>F6SNN2</accession>
<keyword id="KW-0131">Cell cycle</keyword>
<keyword id="KW-0132">Cell division</keyword>
<keyword id="KW-0158">Chromosome</keyword>
<keyword id="KW-0175">Coiled coil</keyword>
<keyword id="KW-0227">DNA damage</keyword>
<keyword id="KW-0234">DNA repair</keyword>
<keyword id="KW-0238">DNA-binding</keyword>
<keyword id="KW-0255">Endonuclease</keyword>
<keyword id="KW-0378">Hydrolase</keyword>
<keyword id="KW-0469">Meiosis</keyword>
<keyword id="KW-0498">Mitosis</keyword>
<keyword id="KW-0540">Nuclease</keyword>
<keyword id="KW-0539">Nucleus</keyword>
<keyword id="KW-0597">Phosphoprotein</keyword>
<keyword id="KW-1185">Reference proteome</keyword>
<keyword id="KW-0862">Zinc</keyword>
<gene>
    <name type="primary">rbbp8</name>
    <name type="synonym">ctip</name>
</gene>
<feature type="chain" id="PRO_0000417040" description="DNA endonuclease RBBP8">
    <location>
        <begin position="1"/>
        <end position="867"/>
    </location>
</feature>
<feature type="region of interest" description="Essential for binding to the MRN complex and for RPA focus formation on DNA damage" evidence="1">
    <location>
        <begin position="25"/>
        <end position="48"/>
    </location>
</feature>
<feature type="region of interest" description="Disordered" evidence="4">
    <location>
        <begin position="141"/>
        <end position="171"/>
    </location>
</feature>
<feature type="region of interest" description="Disordered" evidence="4">
    <location>
        <begin position="448"/>
        <end position="486"/>
    </location>
</feature>
<feature type="region of interest" description="Damage-recruitment motif" evidence="2">
    <location>
        <begin position="508"/>
        <end position="531"/>
    </location>
</feature>
<feature type="region of interest" description="Disordered" evidence="4">
    <location>
        <begin position="843"/>
        <end position="867"/>
    </location>
</feature>
<feature type="coiled-coil region" evidence="3">
    <location>
        <begin position="38"/>
        <end position="87"/>
    </location>
</feature>
<feature type="coiled-coil region" evidence="3">
    <location>
        <begin position="120"/>
        <end position="141"/>
    </location>
</feature>
<feature type="short sequence motif" description="PXDLS motif">
    <location>
        <begin position="489"/>
        <end position="493"/>
    </location>
</feature>
<feature type="compositionally biased region" description="Acidic residues" evidence="4">
    <location>
        <begin position="154"/>
        <end position="166"/>
    </location>
</feature>
<feature type="modified residue" description="Phosphothreonine" evidence="3">
    <location>
        <position position="817"/>
    </location>
</feature>
<feature type="modified residue" description="Phosphothreonine" evidence="3">
    <location>
        <position position="829"/>
    </location>
</feature>
<evidence type="ECO:0000250" key="1"/>
<evidence type="ECO:0000250" key="2">
    <source>
        <dbReference type="UniProtKB" id="Q6GNV6"/>
    </source>
</evidence>
<evidence type="ECO:0000250" key="3">
    <source>
        <dbReference type="UniProtKB" id="Q99708"/>
    </source>
</evidence>
<evidence type="ECO:0000256" key="4">
    <source>
        <dbReference type="SAM" id="MobiDB-lite"/>
    </source>
</evidence>
<evidence type="ECO:0000305" key="5"/>
<name>CTIP_XENTR</name>
<protein>
    <recommendedName>
        <fullName>DNA endonuclease RBBP8</fullName>
        <ecNumber evidence="3">3.1.-.-</ecNumber>
    </recommendedName>
    <alternativeName>
        <fullName>CtBP-interacting protein</fullName>
        <shortName>CtIP</shortName>
    </alternativeName>
</protein>
<dbReference type="EC" id="3.1.-.-" evidence="3"/>
<dbReference type="EMBL" id="AAMC01030587">
    <property type="status" value="NOT_ANNOTATED_CDS"/>
    <property type="molecule type" value="Genomic_DNA"/>
</dbReference>
<dbReference type="EMBL" id="AAMC01030588">
    <property type="status" value="NOT_ANNOTATED_CDS"/>
    <property type="molecule type" value="Genomic_DNA"/>
</dbReference>
<dbReference type="EMBL" id="AAMC01030589">
    <property type="status" value="NOT_ANNOTATED_CDS"/>
    <property type="molecule type" value="Genomic_DNA"/>
</dbReference>
<dbReference type="SMR" id="F6SNN2"/>
<dbReference type="FunCoup" id="F6SNN2">
    <property type="interactions" value="1956"/>
</dbReference>
<dbReference type="STRING" id="8364.ENSXETP00000050224"/>
<dbReference type="PaxDb" id="8364-ENSXETP00000062819"/>
<dbReference type="eggNOG" id="ENOG502QTV5">
    <property type="taxonomic scope" value="Eukaryota"/>
</dbReference>
<dbReference type="HOGENOM" id="CLU_019262_0_0_1"/>
<dbReference type="InParanoid" id="F6SNN2"/>
<dbReference type="TreeFam" id="TF106469"/>
<dbReference type="Proteomes" id="UP000008143">
    <property type="component" value="Unplaced"/>
</dbReference>
<dbReference type="GO" id="GO:0005694">
    <property type="term" value="C:chromosome"/>
    <property type="evidence" value="ECO:0007669"/>
    <property type="project" value="UniProtKB-SubCell"/>
</dbReference>
<dbReference type="GO" id="GO:0005634">
    <property type="term" value="C:nucleus"/>
    <property type="evidence" value="ECO:0007669"/>
    <property type="project" value="UniProtKB-SubCell"/>
</dbReference>
<dbReference type="GO" id="GO:0003677">
    <property type="term" value="F:DNA binding"/>
    <property type="evidence" value="ECO:0007669"/>
    <property type="project" value="UniProtKB-KW"/>
</dbReference>
<dbReference type="GO" id="GO:0004519">
    <property type="term" value="F:endonuclease activity"/>
    <property type="evidence" value="ECO:0007669"/>
    <property type="project" value="UniProtKB-KW"/>
</dbReference>
<dbReference type="GO" id="GO:0051301">
    <property type="term" value="P:cell division"/>
    <property type="evidence" value="ECO:0007669"/>
    <property type="project" value="UniProtKB-KW"/>
</dbReference>
<dbReference type="GO" id="GO:0006281">
    <property type="term" value="P:DNA repair"/>
    <property type="evidence" value="ECO:0007669"/>
    <property type="project" value="UniProtKB-KW"/>
</dbReference>
<dbReference type="GO" id="GO:0051321">
    <property type="term" value="P:meiotic cell cycle"/>
    <property type="evidence" value="ECO:0007669"/>
    <property type="project" value="UniProtKB-KW"/>
</dbReference>
<dbReference type="InterPro" id="IPR019518">
    <property type="entry name" value="CtIP_N"/>
</dbReference>
<dbReference type="InterPro" id="IPR013882">
    <property type="entry name" value="Ctp1_C"/>
</dbReference>
<dbReference type="InterPro" id="IPR033316">
    <property type="entry name" value="RBBP8-like"/>
</dbReference>
<dbReference type="PANTHER" id="PTHR15107:SF4">
    <property type="entry name" value="DNA ENDONUCLEASE RBBP8"/>
    <property type="match status" value="1"/>
</dbReference>
<dbReference type="PANTHER" id="PTHR15107">
    <property type="entry name" value="RETINOBLASTOMA BINDING PROTEIN 8"/>
    <property type="match status" value="1"/>
</dbReference>
<dbReference type="Pfam" id="PF10482">
    <property type="entry name" value="CtIP_N"/>
    <property type="match status" value="1"/>
</dbReference>
<dbReference type="Pfam" id="PF08573">
    <property type="entry name" value="SAE2"/>
    <property type="match status" value="1"/>
</dbReference>
<reference key="1">
    <citation type="journal article" date="2010" name="Science">
        <title>The genome of the Western clawed frog Xenopus tropicalis.</title>
        <authorList>
            <person name="Hellsten U."/>
            <person name="Harland R.M."/>
            <person name="Gilchrist M.J."/>
            <person name="Hendrix D."/>
            <person name="Jurka J."/>
            <person name="Kapitonov V."/>
            <person name="Ovcharenko I."/>
            <person name="Putnam N.H."/>
            <person name="Shu S."/>
            <person name="Taher L."/>
            <person name="Blitz I.L."/>
            <person name="Blumberg B."/>
            <person name="Dichmann D.S."/>
            <person name="Dubchak I."/>
            <person name="Amaya E."/>
            <person name="Detter J.C."/>
            <person name="Fletcher R."/>
            <person name="Gerhard D.S."/>
            <person name="Goodstein D."/>
            <person name="Graves T."/>
            <person name="Grigoriev I.V."/>
            <person name="Grimwood J."/>
            <person name="Kawashima T."/>
            <person name="Lindquist E."/>
            <person name="Lucas S.M."/>
            <person name="Mead P.E."/>
            <person name="Mitros T."/>
            <person name="Ogino H."/>
            <person name="Ohta Y."/>
            <person name="Poliakov A.V."/>
            <person name="Pollet N."/>
            <person name="Robert J."/>
            <person name="Salamov A."/>
            <person name="Sater A.K."/>
            <person name="Schmutz J."/>
            <person name="Terry A."/>
            <person name="Vize P.D."/>
            <person name="Warren W.C."/>
            <person name="Wells D."/>
            <person name="Wills A."/>
            <person name="Wilson R.K."/>
            <person name="Zimmerman L.B."/>
            <person name="Zorn A.M."/>
            <person name="Grainger R."/>
            <person name="Grammer T."/>
            <person name="Khokha M.K."/>
            <person name="Richardson P.M."/>
            <person name="Rokhsar D.S."/>
        </authorList>
    </citation>
    <scope>NUCLEOTIDE SEQUENCE [LARGE SCALE GENOMIC DNA]</scope>
</reference>